<evidence type="ECO:0000255" key="1">
    <source>
        <dbReference type="PROSITE-ProRule" id="PRU00325"/>
    </source>
</evidence>
<evidence type="ECO:0000256" key="2">
    <source>
        <dbReference type="SAM" id="MobiDB-lite"/>
    </source>
</evidence>
<evidence type="ECO:0000305" key="3"/>
<organism>
    <name type="scientific">Mus musculus</name>
    <name type="common">Mouse</name>
    <dbReference type="NCBI Taxonomy" id="10090"/>
    <lineage>
        <taxon>Eukaryota</taxon>
        <taxon>Metazoa</taxon>
        <taxon>Chordata</taxon>
        <taxon>Craniata</taxon>
        <taxon>Vertebrata</taxon>
        <taxon>Euteleostomi</taxon>
        <taxon>Mammalia</taxon>
        <taxon>Eutheria</taxon>
        <taxon>Euarchontoglires</taxon>
        <taxon>Glires</taxon>
        <taxon>Rodentia</taxon>
        <taxon>Myomorpha</taxon>
        <taxon>Muroidea</taxon>
        <taxon>Muridae</taxon>
        <taxon>Murinae</taxon>
        <taxon>Mus</taxon>
        <taxon>Mus</taxon>
    </lineage>
</organism>
<feature type="chain" id="PRO_0000223102" description="Zinc finger SWIM domain-containing protein 4">
    <location>
        <begin position="1"/>
        <end position="1101"/>
    </location>
</feature>
<feature type="zinc finger region" description="SWIM-type" evidence="1">
    <location>
        <begin position="134"/>
        <end position="171"/>
    </location>
</feature>
<feature type="region of interest" description="Disordered" evidence="2">
    <location>
        <begin position="1"/>
        <end position="29"/>
    </location>
</feature>
<feature type="sequence conflict" description="In Ref. 1; BAC35466." evidence="3" ref="1">
    <original>R</original>
    <variation>L</variation>
    <location>
        <position position="26"/>
    </location>
</feature>
<feature type="sequence conflict" description="In Ref. 1; BAC34867." evidence="3" ref="1">
    <original>S</original>
    <variation>G</variation>
    <location>
        <position position="984"/>
    </location>
</feature>
<name>ZSWM4_MOUSE</name>
<sequence>MEPPAAKRSRGCPAGDEPGTGARRSRPEPLLDLSAKRVAESWAFEQVEERFSRVPEPVQKRIVFWSFPRSEREICMYSSLGYQPPEGEQDTRVPFTRGLHLLQSGAVDRVLQVGFHLSGNIREVGGPGEPEHLYHVSISFDRCKITSVSCGCDNRDLFYCAHVVALSLYRIRHARQVELRLPISETLSQMNRDQLQKFVQYLISAHHTEVLPTAQRLADEILLLGSEINLVHGAPDPTAGAGTEDANCWHLDEEQIQEQVKQLLSNGGHYGASQQLRSMFSKVREMLRARDSNGARMLILMTEQFLQDPRLALWRQQGAGMTDKCRQLWDELGALWVCVILSPHCKPDERSGWLQLLGTWDKLDVCPLEEGNYSLDIPSLQPALTSRTGSEDEEEVTAASPRRTVFSRALQAGELHWNDSHLQRILASDSCGPTLTGSMGSDKPTFDPQGHPIWLGEPFPTACARVDTLRAHGYPHKALRLACAIINTLRLQRRHQLESYKQQKKELLQKGATGVTSTEGWVGHPLDPIGCLCRALLEACRLEEEPHSLFPDSAPEKRKLAYQHVLVPGSPGESYLALALEVALLGLGQQRALPEGLYAQDKVVRNEEQLLALLEEVELDERLVQVLRKQAGLLLEGGPFSGFGEVIFRESVPMHTCARYLFTALLPHDPDLAFRLALRAMRLPVLETTFPAGESHPNPLDSIMSNRFPRWFILGHLETRQCELASTMLTAAKGDTKWLHAVLGSVQQNIHSPALLFKLAQDACKTATPASAPPDTVLLGIALELGLQVMRMTLNTMTWRRREMVRWLVSCATEIGPPALMSIMKNWYSLFTPVEAVTIVAVTGTTHATLLRLQLDTAGREELWACARTLALQCAMKDPQNCALPALTLCEKNHAAFEAAYQIVLDAAAGGLGHAHLFTVARYMEHRGLPLRAYKLATLALAQLSIAFNQDSHPAVNDVLWACSLSHSLGRHELSAIVPLIIRSIHCAPMLSDILRRWTLSAPGLGPLGARRATKPLGTDRAPLCQLLDAAVAAYITTSHSRLTHISPRHYGDFIEFLGKARETFLLAPDGHLQFAQFLENLKQTYKGKKKLMLLVRERFG</sequence>
<gene>
    <name type="primary">Zswim4</name>
</gene>
<accession>Q8C7B8</accession>
<accession>Q8BPN9</accession>
<proteinExistence type="evidence at protein level"/>
<reference key="1">
    <citation type="journal article" date="2005" name="Science">
        <title>The transcriptional landscape of the mammalian genome.</title>
        <authorList>
            <person name="Carninci P."/>
            <person name="Kasukawa T."/>
            <person name="Katayama S."/>
            <person name="Gough J."/>
            <person name="Frith M.C."/>
            <person name="Maeda N."/>
            <person name="Oyama R."/>
            <person name="Ravasi T."/>
            <person name="Lenhard B."/>
            <person name="Wells C."/>
            <person name="Kodzius R."/>
            <person name="Shimokawa K."/>
            <person name="Bajic V.B."/>
            <person name="Brenner S.E."/>
            <person name="Batalov S."/>
            <person name="Forrest A.R."/>
            <person name="Zavolan M."/>
            <person name="Davis M.J."/>
            <person name="Wilming L.G."/>
            <person name="Aidinis V."/>
            <person name="Allen J.E."/>
            <person name="Ambesi-Impiombato A."/>
            <person name="Apweiler R."/>
            <person name="Aturaliya R.N."/>
            <person name="Bailey T.L."/>
            <person name="Bansal M."/>
            <person name="Baxter L."/>
            <person name="Beisel K.W."/>
            <person name="Bersano T."/>
            <person name="Bono H."/>
            <person name="Chalk A.M."/>
            <person name="Chiu K.P."/>
            <person name="Choudhary V."/>
            <person name="Christoffels A."/>
            <person name="Clutterbuck D.R."/>
            <person name="Crowe M.L."/>
            <person name="Dalla E."/>
            <person name="Dalrymple B.P."/>
            <person name="de Bono B."/>
            <person name="Della Gatta G."/>
            <person name="di Bernardo D."/>
            <person name="Down T."/>
            <person name="Engstrom P."/>
            <person name="Fagiolini M."/>
            <person name="Faulkner G."/>
            <person name="Fletcher C.F."/>
            <person name="Fukushima T."/>
            <person name="Furuno M."/>
            <person name="Futaki S."/>
            <person name="Gariboldi M."/>
            <person name="Georgii-Hemming P."/>
            <person name="Gingeras T.R."/>
            <person name="Gojobori T."/>
            <person name="Green R.E."/>
            <person name="Gustincich S."/>
            <person name="Harbers M."/>
            <person name="Hayashi Y."/>
            <person name="Hensch T.K."/>
            <person name="Hirokawa N."/>
            <person name="Hill D."/>
            <person name="Huminiecki L."/>
            <person name="Iacono M."/>
            <person name="Ikeo K."/>
            <person name="Iwama A."/>
            <person name="Ishikawa T."/>
            <person name="Jakt M."/>
            <person name="Kanapin A."/>
            <person name="Katoh M."/>
            <person name="Kawasawa Y."/>
            <person name="Kelso J."/>
            <person name="Kitamura H."/>
            <person name="Kitano H."/>
            <person name="Kollias G."/>
            <person name="Krishnan S.P."/>
            <person name="Kruger A."/>
            <person name="Kummerfeld S.K."/>
            <person name="Kurochkin I.V."/>
            <person name="Lareau L.F."/>
            <person name="Lazarevic D."/>
            <person name="Lipovich L."/>
            <person name="Liu J."/>
            <person name="Liuni S."/>
            <person name="McWilliam S."/>
            <person name="Madan Babu M."/>
            <person name="Madera M."/>
            <person name="Marchionni L."/>
            <person name="Matsuda H."/>
            <person name="Matsuzawa S."/>
            <person name="Miki H."/>
            <person name="Mignone F."/>
            <person name="Miyake S."/>
            <person name="Morris K."/>
            <person name="Mottagui-Tabar S."/>
            <person name="Mulder N."/>
            <person name="Nakano N."/>
            <person name="Nakauchi H."/>
            <person name="Ng P."/>
            <person name="Nilsson R."/>
            <person name="Nishiguchi S."/>
            <person name="Nishikawa S."/>
            <person name="Nori F."/>
            <person name="Ohara O."/>
            <person name="Okazaki Y."/>
            <person name="Orlando V."/>
            <person name="Pang K.C."/>
            <person name="Pavan W.J."/>
            <person name="Pavesi G."/>
            <person name="Pesole G."/>
            <person name="Petrovsky N."/>
            <person name="Piazza S."/>
            <person name="Reed J."/>
            <person name="Reid J.F."/>
            <person name="Ring B.Z."/>
            <person name="Ringwald M."/>
            <person name="Rost B."/>
            <person name="Ruan Y."/>
            <person name="Salzberg S.L."/>
            <person name="Sandelin A."/>
            <person name="Schneider C."/>
            <person name="Schoenbach C."/>
            <person name="Sekiguchi K."/>
            <person name="Semple C.A."/>
            <person name="Seno S."/>
            <person name="Sessa L."/>
            <person name="Sheng Y."/>
            <person name="Shibata Y."/>
            <person name="Shimada H."/>
            <person name="Shimada K."/>
            <person name="Silva D."/>
            <person name="Sinclair B."/>
            <person name="Sperling S."/>
            <person name="Stupka E."/>
            <person name="Sugiura K."/>
            <person name="Sultana R."/>
            <person name="Takenaka Y."/>
            <person name="Taki K."/>
            <person name="Tammoja K."/>
            <person name="Tan S.L."/>
            <person name="Tang S."/>
            <person name="Taylor M.S."/>
            <person name="Tegner J."/>
            <person name="Teichmann S.A."/>
            <person name="Ueda H.R."/>
            <person name="van Nimwegen E."/>
            <person name="Verardo R."/>
            <person name="Wei C.L."/>
            <person name="Yagi K."/>
            <person name="Yamanishi H."/>
            <person name="Zabarovsky E."/>
            <person name="Zhu S."/>
            <person name="Zimmer A."/>
            <person name="Hide W."/>
            <person name="Bult C."/>
            <person name="Grimmond S.M."/>
            <person name="Teasdale R.D."/>
            <person name="Liu E.T."/>
            <person name="Brusic V."/>
            <person name="Quackenbush J."/>
            <person name="Wahlestedt C."/>
            <person name="Mattick J.S."/>
            <person name="Hume D.A."/>
            <person name="Kai C."/>
            <person name="Sasaki D."/>
            <person name="Tomaru Y."/>
            <person name="Fukuda S."/>
            <person name="Kanamori-Katayama M."/>
            <person name="Suzuki M."/>
            <person name="Aoki J."/>
            <person name="Arakawa T."/>
            <person name="Iida J."/>
            <person name="Imamura K."/>
            <person name="Itoh M."/>
            <person name="Kato T."/>
            <person name="Kawaji H."/>
            <person name="Kawagashira N."/>
            <person name="Kawashima T."/>
            <person name="Kojima M."/>
            <person name="Kondo S."/>
            <person name="Konno H."/>
            <person name="Nakano K."/>
            <person name="Ninomiya N."/>
            <person name="Nishio T."/>
            <person name="Okada M."/>
            <person name="Plessy C."/>
            <person name="Shibata K."/>
            <person name="Shiraki T."/>
            <person name="Suzuki S."/>
            <person name="Tagami M."/>
            <person name="Waki K."/>
            <person name="Watahiki A."/>
            <person name="Okamura-Oho Y."/>
            <person name="Suzuki H."/>
            <person name="Kawai J."/>
            <person name="Hayashizaki Y."/>
        </authorList>
    </citation>
    <scope>NUCLEOTIDE SEQUENCE [LARGE SCALE MRNA]</scope>
    <source>
        <strain>C57BL/6J</strain>
        <tissue>Eye</tissue>
        <tissue>Heart</tissue>
    </source>
</reference>
<reference key="2">
    <citation type="journal article" date="2004" name="Genome Res.">
        <title>The status, quality, and expansion of the NIH full-length cDNA project: the Mammalian Gene Collection (MGC).</title>
        <authorList>
            <consortium name="The MGC Project Team"/>
        </authorList>
    </citation>
    <scope>NUCLEOTIDE SEQUENCE [LARGE SCALE MRNA]</scope>
    <source>
        <strain>C57BL/6J</strain>
        <tissue>Brain</tissue>
    </source>
</reference>
<keyword id="KW-0479">Metal-binding</keyword>
<keyword id="KW-1185">Reference proteome</keyword>
<keyword id="KW-0862">Zinc</keyword>
<keyword id="KW-0863">Zinc-finger</keyword>
<dbReference type="EMBL" id="AK052168">
    <property type="protein sequence ID" value="BAC34867.1"/>
    <property type="molecule type" value="mRNA"/>
</dbReference>
<dbReference type="EMBL" id="AK053663">
    <property type="protein sequence ID" value="BAC35466.1"/>
    <property type="status" value="ALT_INIT"/>
    <property type="molecule type" value="mRNA"/>
</dbReference>
<dbReference type="EMBL" id="BC058080">
    <property type="protein sequence ID" value="AAH58080.1"/>
    <property type="molecule type" value="mRNA"/>
</dbReference>
<dbReference type="CCDS" id="CCDS22471.1"/>
<dbReference type="RefSeq" id="NP_766091.2">
    <property type="nucleotide sequence ID" value="NM_172503.3"/>
</dbReference>
<dbReference type="BioGRID" id="229300">
    <property type="interactions" value="2"/>
</dbReference>
<dbReference type="FunCoup" id="Q8C7B8">
    <property type="interactions" value="56"/>
</dbReference>
<dbReference type="IntAct" id="Q8C7B8">
    <property type="interactions" value="2"/>
</dbReference>
<dbReference type="STRING" id="10090.ENSMUSP00000040078"/>
<dbReference type="GlyGen" id="Q8C7B8">
    <property type="glycosylation" value="1 site"/>
</dbReference>
<dbReference type="iPTMnet" id="Q8C7B8"/>
<dbReference type="PhosphoSitePlus" id="Q8C7B8"/>
<dbReference type="PaxDb" id="10090-ENSMUSP00000040078"/>
<dbReference type="ProteomicsDB" id="275162"/>
<dbReference type="Antibodypedia" id="50167">
    <property type="antibodies" value="8 antibodies from 7 providers"/>
</dbReference>
<dbReference type="DNASU" id="212168"/>
<dbReference type="Ensembl" id="ENSMUST00000039480.7">
    <property type="protein sequence ID" value="ENSMUSP00000040078.6"/>
    <property type="gene ID" value="ENSMUSG00000035671.7"/>
</dbReference>
<dbReference type="GeneID" id="212168"/>
<dbReference type="KEGG" id="mmu:212168"/>
<dbReference type="UCSC" id="uc009mmg.1">
    <property type="organism name" value="mouse"/>
</dbReference>
<dbReference type="AGR" id="MGI:2443726"/>
<dbReference type="CTD" id="65249"/>
<dbReference type="MGI" id="MGI:2443726">
    <property type="gene designation" value="Zswim4"/>
</dbReference>
<dbReference type="VEuPathDB" id="HostDB:ENSMUSG00000035671"/>
<dbReference type="eggNOG" id="KOG3615">
    <property type="taxonomic scope" value="Eukaryota"/>
</dbReference>
<dbReference type="GeneTree" id="ENSGT00940000162102"/>
<dbReference type="HOGENOM" id="CLU_005301_1_0_1"/>
<dbReference type="InParanoid" id="Q8C7B8"/>
<dbReference type="OMA" id="ILMTQQF"/>
<dbReference type="OrthoDB" id="10013584at2759"/>
<dbReference type="PhylomeDB" id="Q8C7B8"/>
<dbReference type="TreeFam" id="TF324881"/>
<dbReference type="BioGRID-ORCS" id="212168">
    <property type="hits" value="1 hit in 76 CRISPR screens"/>
</dbReference>
<dbReference type="ChiTaRS" id="Zswim4">
    <property type="organism name" value="mouse"/>
</dbReference>
<dbReference type="PRO" id="PR:Q8C7B8"/>
<dbReference type="Proteomes" id="UP000000589">
    <property type="component" value="Chromosome 8"/>
</dbReference>
<dbReference type="RNAct" id="Q8C7B8">
    <property type="molecule type" value="protein"/>
</dbReference>
<dbReference type="Bgee" id="ENSMUSG00000035671">
    <property type="expression patterns" value="Expressed in cortical plate and 148 other cell types or tissues"/>
</dbReference>
<dbReference type="GO" id="GO:0008270">
    <property type="term" value="F:zinc ion binding"/>
    <property type="evidence" value="ECO:0007669"/>
    <property type="project" value="UniProtKB-KW"/>
</dbReference>
<dbReference type="InterPro" id="IPR007527">
    <property type="entry name" value="Znf_SWIM"/>
</dbReference>
<dbReference type="InterPro" id="IPR048370">
    <property type="entry name" value="ZSWIM4-8_C"/>
</dbReference>
<dbReference type="PANTHER" id="PTHR22619">
    <property type="entry name" value="ZINC FINGER SWIM DOMAIN CONTAINING PROTEIN 4, 5, 6"/>
    <property type="match status" value="1"/>
</dbReference>
<dbReference type="PANTHER" id="PTHR22619:SF4">
    <property type="entry name" value="ZINC FINGER SWIM DOMAIN-CONTAINING PROTEIN 4"/>
    <property type="match status" value="1"/>
</dbReference>
<dbReference type="Pfam" id="PF21055">
    <property type="entry name" value="ZSWIM4-8_C"/>
    <property type="match status" value="1"/>
</dbReference>
<dbReference type="PROSITE" id="PS50966">
    <property type="entry name" value="ZF_SWIM"/>
    <property type="match status" value="1"/>
</dbReference>
<protein>
    <recommendedName>
        <fullName>Zinc finger SWIM domain-containing protein 4</fullName>
    </recommendedName>
</protein>
<comment type="interaction">
    <interactant intactId="EBI-26673088">
        <id>Q8C7B8</id>
    </interactant>
    <interactant intactId="EBI-1606991">
        <id>Q61545</id>
        <label>Ewsr1</label>
    </interactant>
    <organismsDiffer>false</organismsDiffer>
    <experiments>2</experiments>
</comment>
<comment type="sequence caution" evidence="3">
    <conflict type="erroneous initiation">
        <sequence resource="EMBL-CDS" id="BAC35466"/>
    </conflict>
</comment>